<proteinExistence type="evidence at protein level"/>
<protein>
    <recommendedName>
        <fullName evidence="7">Sesquiterpene synthase 12</fullName>
        <shortName evidence="7">SlTPS12</shortName>
        <shortName evidence="7">Terpene synthase 12</shortName>
    </recommendedName>
    <alternativeName>
        <fullName evidence="8">(E)-beta-ocimene synthase TPS12</fullName>
        <ecNumber evidence="5">4.2.3.106</ecNumber>
    </alternativeName>
    <alternativeName>
        <fullName evidence="8">(Z)-gamma-bisabolene synthase TPS12</fullName>
        <ecNumber evidence="5">4.2.3.-</ecNumber>
    </alternativeName>
    <alternativeName>
        <fullName evidence="6 7 8">Alpha-humulene synthase TPS12</fullName>
        <ecNumber evidence="3 4 5">4.2.3.104</ecNumber>
    </alternativeName>
    <alternativeName>
        <fullName evidence="8">Beta bisabolene synthase TPS12</fullName>
        <ecNumber evidence="5">4.2.3.-</ecNumber>
    </alternativeName>
    <alternativeName>
        <fullName evidence="6 7 8">Beta caryophyllene synthase TPS12</fullName>
        <ecNumber evidence="3 4 5">4.2.3.57</ecNumber>
    </alternativeName>
    <alternativeName>
        <fullName evidence="8">Beta-myrcene synthase TPS12</fullName>
        <ecNumber evidence="5">4.2.3.15</ecNumber>
    </alternativeName>
    <alternativeName>
        <fullName evidence="8">Gamma-curcumene synthase TPS12</fullName>
        <ecNumber evidence="5">4.2.3.-</ecNumber>
    </alternativeName>
    <alternativeName>
        <fullName evidence="8">Limonene synthase TPS12</fullName>
        <ecNumber evidence="5">4.2.3.-</ecNumber>
    </alternativeName>
    <alternativeName>
        <fullName evidence="8">Terpinolene synthase TPS12</fullName>
        <ecNumber evidence="5">4.2.3.113</ecNumber>
    </alternativeName>
</protein>
<comment type="function">
    <text evidence="3 4 5">Sesquiterpene synthase involved in the biosynthesis of volatile compounds (PubMed:20431087, PubMed:21813655, PubMed:21818683). Mediates the conversion of (2E,6E)-farnesyl diphosphate (FPP) into (1E,4E,8E)-alpha-humulene and (-)-(E)-beta-caryophyllene, and of (2Z,6Z)-farnesyl diphosphate ((ZZ)-FPP) into beta-bisabolene, gamma-curcumene and (Z)-gamma-bisabolene (PubMed:20431087, PubMed:21813655, PubMed:21818683). Can act with a low efficiency as a monoterpene synthase with geranyl diphosphate (GPP) as substrate, thus producing beta-myrcene, (E)-beta-ocimene, limonene and terpinolene (PubMed:21818683).</text>
</comment>
<comment type="catalytic activity">
    <reaction evidence="3 4 5">
        <text>(2E,6E)-farnesyl diphosphate = alpha-humulene + diphosphate</text>
        <dbReference type="Rhea" id="RHEA:31895"/>
        <dbReference type="ChEBI" id="CHEBI:5768"/>
        <dbReference type="ChEBI" id="CHEBI:33019"/>
        <dbReference type="ChEBI" id="CHEBI:175763"/>
        <dbReference type="EC" id="4.2.3.104"/>
    </reaction>
    <physiologicalReaction direction="left-to-right" evidence="3 4 5">
        <dbReference type="Rhea" id="RHEA:31896"/>
    </physiologicalReaction>
</comment>
<comment type="catalytic activity">
    <reaction evidence="3 4 5">
        <text>(2E,6E)-farnesyl diphosphate = (-)-(E)-beta-caryophyllene + diphosphate</text>
        <dbReference type="Rhea" id="RHEA:28294"/>
        <dbReference type="ChEBI" id="CHEBI:10357"/>
        <dbReference type="ChEBI" id="CHEBI:33019"/>
        <dbReference type="ChEBI" id="CHEBI:175763"/>
        <dbReference type="EC" id="4.2.3.57"/>
    </reaction>
    <physiologicalReaction direction="left-to-right" evidence="3 4 5">
        <dbReference type="Rhea" id="RHEA:28295"/>
    </physiologicalReaction>
</comment>
<comment type="catalytic activity">
    <reaction evidence="5">
        <text>(2Z,6Z)-farnesyl diphosphate = beta-bisabolene + diphosphate</text>
        <dbReference type="Rhea" id="RHEA:68524"/>
        <dbReference type="ChEBI" id="CHEBI:33019"/>
        <dbReference type="ChEBI" id="CHEBI:49249"/>
        <dbReference type="ChEBI" id="CHEBI:60374"/>
    </reaction>
    <physiologicalReaction direction="left-to-right" evidence="5">
        <dbReference type="Rhea" id="RHEA:68525"/>
    </physiologicalReaction>
</comment>
<comment type="catalytic activity">
    <reaction evidence="5">
        <text>(2E)-geranyl diphosphate = terpinolene + diphosphate</text>
        <dbReference type="Rhea" id="RHEA:25500"/>
        <dbReference type="ChEBI" id="CHEBI:9457"/>
        <dbReference type="ChEBI" id="CHEBI:33019"/>
        <dbReference type="ChEBI" id="CHEBI:58057"/>
        <dbReference type="EC" id="4.2.3.113"/>
    </reaction>
    <physiologicalReaction direction="left-to-right" evidence="5">
        <dbReference type="Rhea" id="RHEA:25501"/>
    </physiologicalReaction>
</comment>
<comment type="catalytic activity">
    <reaction evidence="5">
        <text>(2E)-geranyl diphosphate = limonene + diphosphate</text>
        <dbReference type="Rhea" id="RHEA:68640"/>
        <dbReference type="ChEBI" id="CHEBI:15384"/>
        <dbReference type="ChEBI" id="CHEBI:33019"/>
        <dbReference type="ChEBI" id="CHEBI:58057"/>
    </reaction>
    <physiologicalReaction direction="left-to-right" evidence="5">
        <dbReference type="Rhea" id="RHEA:68641"/>
    </physiologicalReaction>
</comment>
<comment type="catalytic activity">
    <reaction evidence="5">
        <text>(2E)-geranyl diphosphate = beta-myrcene + diphosphate</text>
        <dbReference type="Rhea" id="RHEA:16965"/>
        <dbReference type="ChEBI" id="CHEBI:17221"/>
        <dbReference type="ChEBI" id="CHEBI:33019"/>
        <dbReference type="ChEBI" id="CHEBI:58057"/>
        <dbReference type="EC" id="4.2.3.15"/>
    </reaction>
    <physiologicalReaction direction="left-to-right" evidence="5">
        <dbReference type="Rhea" id="RHEA:16966"/>
    </physiologicalReaction>
</comment>
<comment type="catalytic activity">
    <reaction evidence="5">
        <text>(2E)-geranyl diphosphate = (E)-beta-ocimene + diphosphate</text>
        <dbReference type="Rhea" id="RHEA:32691"/>
        <dbReference type="ChEBI" id="CHEBI:33019"/>
        <dbReference type="ChEBI" id="CHEBI:58057"/>
        <dbReference type="ChEBI" id="CHEBI:64280"/>
        <dbReference type="EC" id="4.2.3.106"/>
    </reaction>
    <physiologicalReaction direction="left-to-right" evidence="5">
        <dbReference type="Rhea" id="RHEA:32692"/>
    </physiologicalReaction>
</comment>
<comment type="catalytic activity">
    <reaction evidence="5">
        <text>(2Z,6Z)-farnesyl diphosphate = gamma-curcumene + diphosphate</text>
        <dbReference type="Rhea" id="RHEA:68784"/>
        <dbReference type="ChEBI" id="CHEBI:33019"/>
        <dbReference type="ChEBI" id="CHEBI:60374"/>
        <dbReference type="ChEBI" id="CHEBI:63696"/>
    </reaction>
    <physiologicalReaction direction="left-to-right" evidence="5">
        <dbReference type="Rhea" id="RHEA:68785"/>
    </physiologicalReaction>
</comment>
<comment type="catalytic activity">
    <reaction evidence="5">
        <text>(2Z,6Z)-farnesyl diphosphate = (Z)-gamma-bisabolene + diphosphate</text>
        <dbReference type="Rhea" id="RHEA:68788"/>
        <dbReference type="ChEBI" id="CHEBI:33019"/>
        <dbReference type="ChEBI" id="CHEBI:49238"/>
        <dbReference type="ChEBI" id="CHEBI:60374"/>
    </reaction>
    <physiologicalReaction direction="left-to-right" evidence="5">
        <dbReference type="Rhea" id="RHEA:68789"/>
    </physiologicalReaction>
</comment>
<comment type="cofactor">
    <cofactor evidence="1">
        <name>Mg(2+)</name>
        <dbReference type="ChEBI" id="CHEBI:18420"/>
    </cofactor>
    <cofactor evidence="1">
        <name>Mn(2+)</name>
        <dbReference type="ChEBI" id="CHEBI:29035"/>
    </cofactor>
    <text evidence="1">Binds 3 Mg(2+) or Mn(2+) ions per subunit.</text>
</comment>
<comment type="pathway">
    <text evidence="3 4 5">Secondary metabolite biosynthesis; terpenoid biosynthesis.</text>
</comment>
<comment type="tissue specificity">
    <text evidence="4 5">Mostly expressed in leaves, to a lower extent in stems, trichomes, flowers and roots and, at low levels, in fruits.</text>
</comment>
<comment type="domain">
    <text evidence="2">The Asp-Asp-Xaa-Xaa-Asp/Glu (DDXXD/E) motif is important for the catalytic activity, presumably through binding to Mg(2+).</text>
</comment>
<comment type="similarity">
    <text evidence="9">Belongs to the terpene synthase family. Tpsa subfamily.</text>
</comment>
<gene>
    <name evidence="7" type="primary">TPS12</name>
    <name evidence="10" type="synonym">CAHS</name>
</gene>
<evidence type="ECO:0000250" key="1">
    <source>
        <dbReference type="UniProtKB" id="A0A1C9J6A7"/>
    </source>
</evidence>
<evidence type="ECO:0000250" key="2">
    <source>
        <dbReference type="UniProtKB" id="Q40577"/>
    </source>
</evidence>
<evidence type="ECO:0000269" key="3">
    <source>
    </source>
</evidence>
<evidence type="ECO:0000269" key="4">
    <source>
    </source>
</evidence>
<evidence type="ECO:0000269" key="5">
    <source>
    </source>
</evidence>
<evidence type="ECO:0000303" key="6">
    <source>
    </source>
</evidence>
<evidence type="ECO:0000303" key="7">
    <source>
    </source>
</evidence>
<evidence type="ECO:0000303" key="8">
    <source>
    </source>
</evidence>
<evidence type="ECO:0000305" key="9"/>
<evidence type="ECO:0000312" key="10">
    <source>
        <dbReference type="EMBL" id="ADD96698.1"/>
    </source>
</evidence>
<organism>
    <name type="scientific">Solanum lycopersicum</name>
    <name type="common">Tomato</name>
    <name type="synonym">Lycopersicon esculentum</name>
    <dbReference type="NCBI Taxonomy" id="4081"/>
    <lineage>
        <taxon>Eukaryota</taxon>
        <taxon>Viridiplantae</taxon>
        <taxon>Streptophyta</taxon>
        <taxon>Embryophyta</taxon>
        <taxon>Tracheophyta</taxon>
        <taxon>Spermatophyta</taxon>
        <taxon>Magnoliopsida</taxon>
        <taxon>eudicotyledons</taxon>
        <taxon>Gunneridae</taxon>
        <taxon>Pentapetalae</taxon>
        <taxon>asterids</taxon>
        <taxon>lamiids</taxon>
        <taxon>Solanales</taxon>
        <taxon>Solanaceae</taxon>
        <taxon>Solanoideae</taxon>
        <taxon>Solaneae</taxon>
        <taxon>Solanum</taxon>
        <taxon>Solanum subgen. Lycopersicon</taxon>
    </lineage>
</organism>
<accession>D5KXD2</accession>
<feature type="chain" id="PRO_0000454690" description="Sesquiterpene synthase 12">
    <location>
        <begin position="1"/>
        <end position="548"/>
    </location>
</feature>
<feature type="short sequence motif" description="DDXXD motif" evidence="1">
    <location>
        <begin position="299"/>
        <end position="303"/>
    </location>
</feature>
<feature type="binding site" evidence="2">
    <location>
        <position position="299"/>
    </location>
    <ligand>
        <name>Mg(2+)</name>
        <dbReference type="ChEBI" id="CHEBI:18420"/>
        <label>1</label>
    </ligand>
</feature>
<feature type="binding site" evidence="2">
    <location>
        <position position="299"/>
    </location>
    <ligand>
        <name>Mg(2+)</name>
        <dbReference type="ChEBI" id="CHEBI:18420"/>
        <label>2</label>
    </ligand>
</feature>
<feature type="binding site" evidence="2">
    <location>
        <position position="303"/>
    </location>
    <ligand>
        <name>Mg(2+)</name>
        <dbReference type="ChEBI" id="CHEBI:18420"/>
        <label>1</label>
    </ligand>
</feature>
<feature type="binding site" evidence="2">
    <location>
        <position position="303"/>
    </location>
    <ligand>
        <name>Mg(2+)</name>
        <dbReference type="ChEBI" id="CHEBI:18420"/>
        <label>2</label>
    </ligand>
</feature>
<feature type="binding site" evidence="2">
    <location>
        <position position="444"/>
    </location>
    <ligand>
        <name>Mg(2+)</name>
        <dbReference type="ChEBI" id="CHEBI:18420"/>
        <label>3</label>
    </ligand>
</feature>
<feature type="binding site" evidence="2">
    <location>
        <position position="452"/>
    </location>
    <ligand>
        <name>Mg(2+)</name>
        <dbReference type="ChEBI" id="CHEBI:18420"/>
        <label>3</label>
    </ligand>
</feature>
<reference key="1">
    <citation type="journal article" date="2010" name="Plant Physiol.">
        <title>Studies of a biochemical factory: tomato trichome deep expressed sequence tag sequencing and proteomics.</title>
        <authorList>
            <person name="Schilmiller A.L."/>
            <person name="Miner D.P."/>
            <person name="Larson M."/>
            <person name="McDowell E."/>
            <person name="Gang D.R."/>
            <person name="Wilkerson C."/>
            <person name="Last R.L."/>
        </authorList>
    </citation>
    <scope>NUCLEOTIDE SEQUENCE [MRNA]</scope>
    <source>
        <strain>cv. M82</strain>
        <tissue>Trichome gland</tissue>
    </source>
</reference>
<reference key="2">
    <citation type="journal article" date="2011" name="Plant Physiol.">
        <title>The tomato terpene synthase gene family.</title>
        <authorList>
            <person name="Falara V."/>
            <person name="Akhtar T.A."/>
            <person name="Nguyen T.T.H."/>
            <person name="Spyropoulou E.A."/>
            <person name="Bleeker P.M."/>
            <person name="Schauvinhold I."/>
            <person name="Matsuba Y."/>
            <person name="Bonini M.E."/>
            <person name="Schilmiller A.L."/>
            <person name="Last R.L."/>
            <person name="Schuurink R.C."/>
            <person name="Pichersky E."/>
        </authorList>
    </citation>
    <scope>NUCLEOTIDE SEQUENCE [GENOMIC DNA]</scope>
    <scope>TISSUE SPECIFICITY</scope>
    <scope>GENE FAMILY</scope>
    <source>
        <strain>cv. M82</strain>
    </source>
</reference>
<reference key="3">
    <citation type="journal article" date="2011" name="Plant Mol. Biol.">
        <title>RNA-seq discovery, functional characterization, and comparison of sesquiterpene synthases from Solanum lycopersicum and Solanum habrochaites trichomes.</title>
        <authorList>
            <person name="Bleeker P.M."/>
            <person name="Spyropoulou E.A."/>
            <person name="Diergaarde P.J."/>
            <person name="Volpin H."/>
            <person name="De Both M.T.J."/>
            <person name="Zerbe P."/>
            <person name="Bohlmann J."/>
            <person name="Falara V."/>
            <person name="Matsuba Y."/>
            <person name="Pichersky E."/>
            <person name="Haring M.A."/>
            <person name="Schuurink R.C."/>
        </authorList>
    </citation>
    <scope>FUNCTION</scope>
    <scope>CATALYTIC ACTIVITY</scope>
    <scope>PATHWAY</scope>
    <scope>TISSUE SPECIFICITY</scope>
    <scope>GENE FAMILY</scope>
</reference>
<name>TPS12_SOLLC</name>
<keyword id="KW-0456">Lyase</keyword>
<keyword id="KW-0460">Magnesium</keyword>
<keyword id="KW-0479">Metal-binding</keyword>
<keyword id="KW-1185">Reference proteome</keyword>
<sequence>MASSSANKCRPLANFHPTVWGYHFLSYTHEITNQEKVEVDEYKETIRKMLVEAPEGSEQKLVLIDAMQRLGVAYHFDNEIETSIQNIFDASSKQNDNDNNLYVVSLRFRLVRQQGHYMSSDVFKQFINQDGKFKETLTNDVQGLLSLYEASHLRVRDEEILEEALTFTTTHLESTVSNLSNNNSLKAEVTEAFSQPIRMTLPRVGARKYISIYENNDAHNHLLLKFAKLDFNMLQKLHQRELSDLTRWWKDLDFANKYPYARDRLVECYFWILGVYFEPKYSRARKMMTKVIQMASFFDDTFDAYATFDELEPFNNAIQRWDINAIDSVPPYLRHAYQALLDIYSEMEQALAKEFKSDRVYYAKYEMKKLVRAYFKEAQWLNNDNHIPKYEEHMENAMVSAGYMMGATTCLVGVEEFISKETFEWMINEPLIVRASSLIARAMDDIVGHEVEQQREHGASLIECYMKDYGVSKQEAYVKFQKEVTNGWMDINREFFCPDVEVPKFVLERVLNFTRVINTLYKEKDEYTNSKGKFKNMIISLLVESVEI</sequence>
<dbReference type="EC" id="4.2.3.106" evidence="5"/>
<dbReference type="EC" id="4.2.3.-" evidence="5"/>
<dbReference type="EC" id="4.2.3.104" evidence="3 4 5"/>
<dbReference type="EC" id="4.2.3.57" evidence="3 4 5"/>
<dbReference type="EC" id="4.2.3.15" evidence="5"/>
<dbReference type="EC" id="4.2.3.113" evidence="5"/>
<dbReference type="EMBL" id="GU647162">
    <property type="protein sequence ID" value="ADD96698.1"/>
    <property type="molecule type" value="mRNA"/>
</dbReference>
<dbReference type="EMBL" id="JN412092">
    <property type="protein sequence ID" value="AEP82783.1"/>
    <property type="molecule type" value="Genomic_DNA"/>
</dbReference>
<dbReference type="RefSeq" id="NP_001234766.1">
    <property type="nucleotide sequence ID" value="NM_001247837.1"/>
</dbReference>
<dbReference type="SMR" id="D5KXD2"/>
<dbReference type="FunCoup" id="D5KXD2">
    <property type="interactions" value="20"/>
</dbReference>
<dbReference type="GeneID" id="104648118"/>
<dbReference type="KEGG" id="sly:104648118"/>
<dbReference type="InParanoid" id="D5KXD2"/>
<dbReference type="OrthoDB" id="1877784at2759"/>
<dbReference type="BioCyc" id="MetaCyc:MONOMER-16135"/>
<dbReference type="BRENDA" id="4.2.3.104">
    <property type="organism ID" value="3101"/>
</dbReference>
<dbReference type="UniPathway" id="UPA00213"/>
<dbReference type="Proteomes" id="UP000004994">
    <property type="component" value="Unplaced"/>
</dbReference>
<dbReference type="ExpressionAtlas" id="D5KXD2">
    <property type="expression patterns" value="baseline and differential"/>
</dbReference>
<dbReference type="GO" id="GO:0000287">
    <property type="term" value="F:magnesium ion binding"/>
    <property type="evidence" value="ECO:0007669"/>
    <property type="project" value="InterPro"/>
</dbReference>
<dbReference type="GO" id="GO:0010333">
    <property type="term" value="F:terpene synthase activity"/>
    <property type="evidence" value="ECO:0000314"/>
    <property type="project" value="UniProtKB"/>
</dbReference>
<dbReference type="GO" id="GO:0016102">
    <property type="term" value="P:diterpenoid biosynthetic process"/>
    <property type="evidence" value="ECO:0007669"/>
    <property type="project" value="InterPro"/>
</dbReference>
<dbReference type="GO" id="GO:0016114">
    <property type="term" value="P:terpenoid biosynthetic process"/>
    <property type="evidence" value="ECO:0000314"/>
    <property type="project" value="UniProtKB"/>
</dbReference>
<dbReference type="CDD" id="cd00684">
    <property type="entry name" value="Terpene_cyclase_plant_C1"/>
    <property type="match status" value="1"/>
</dbReference>
<dbReference type="FunFam" id="1.10.600.10:FF:000007">
    <property type="entry name" value="Isoprene synthase, chloroplastic"/>
    <property type="match status" value="1"/>
</dbReference>
<dbReference type="FunFam" id="1.50.10.130:FF:000001">
    <property type="entry name" value="Isoprene synthase, chloroplastic"/>
    <property type="match status" value="1"/>
</dbReference>
<dbReference type="Gene3D" id="1.10.600.10">
    <property type="entry name" value="Farnesyl Diphosphate Synthase"/>
    <property type="match status" value="1"/>
</dbReference>
<dbReference type="Gene3D" id="1.50.10.130">
    <property type="entry name" value="Terpene synthase, N-terminal domain"/>
    <property type="match status" value="1"/>
</dbReference>
<dbReference type="InterPro" id="IPR008949">
    <property type="entry name" value="Isoprenoid_synthase_dom_sf"/>
</dbReference>
<dbReference type="InterPro" id="IPR034741">
    <property type="entry name" value="Terpene_cyclase-like_1_C"/>
</dbReference>
<dbReference type="InterPro" id="IPR044814">
    <property type="entry name" value="Terpene_cyclase_plant_C1"/>
</dbReference>
<dbReference type="InterPro" id="IPR001906">
    <property type="entry name" value="Terpene_synth_N"/>
</dbReference>
<dbReference type="InterPro" id="IPR036965">
    <property type="entry name" value="Terpene_synth_N_sf"/>
</dbReference>
<dbReference type="InterPro" id="IPR050148">
    <property type="entry name" value="Terpene_synthase-like"/>
</dbReference>
<dbReference type="InterPro" id="IPR005630">
    <property type="entry name" value="Terpene_synthase_metal-bd"/>
</dbReference>
<dbReference type="InterPro" id="IPR008930">
    <property type="entry name" value="Terpenoid_cyclase/PrenylTrfase"/>
</dbReference>
<dbReference type="PANTHER" id="PTHR31225">
    <property type="entry name" value="OS04G0344100 PROTEIN-RELATED"/>
    <property type="match status" value="1"/>
</dbReference>
<dbReference type="PANTHER" id="PTHR31225:SF225">
    <property type="entry name" value="SESQUITERPENE SYNTHASE 12"/>
    <property type="match status" value="1"/>
</dbReference>
<dbReference type="Pfam" id="PF01397">
    <property type="entry name" value="Terpene_synth"/>
    <property type="match status" value="1"/>
</dbReference>
<dbReference type="Pfam" id="PF03936">
    <property type="entry name" value="Terpene_synth_C"/>
    <property type="match status" value="1"/>
</dbReference>
<dbReference type="SFLD" id="SFLDS00005">
    <property type="entry name" value="Isoprenoid_Synthase_Type_I"/>
    <property type="match status" value="1"/>
</dbReference>
<dbReference type="SFLD" id="SFLDG01019">
    <property type="entry name" value="Terpene_Cyclase_Like_1_C_Termi"/>
    <property type="match status" value="1"/>
</dbReference>
<dbReference type="SUPFAM" id="SSF48239">
    <property type="entry name" value="Terpenoid cyclases/Protein prenyltransferases"/>
    <property type="match status" value="1"/>
</dbReference>
<dbReference type="SUPFAM" id="SSF48576">
    <property type="entry name" value="Terpenoid synthases"/>
    <property type="match status" value="1"/>
</dbReference>